<dbReference type="EC" id="3.4.22.-"/>
<dbReference type="EMBL" id="FN652779">
    <property type="protein sequence ID" value="CBJ15397.1"/>
    <property type="molecule type" value="Genomic_DNA"/>
</dbReference>
<dbReference type="RefSeq" id="WP_014541837.1">
    <property type="nucleotide sequence ID" value="NC_017441.1"/>
</dbReference>
<dbReference type="SMR" id="D3UTF4"/>
<dbReference type="MEROPS" id="C48.032"/>
<dbReference type="KEGG" id="csw:SW2_8841"/>
<dbReference type="PATRIC" id="fig|634464.3.peg.964"/>
<dbReference type="HOGENOM" id="CLU_067510_0_0_0"/>
<dbReference type="GO" id="GO:0005576">
    <property type="term" value="C:extracellular region"/>
    <property type="evidence" value="ECO:0000250"/>
    <property type="project" value="UniProtKB"/>
</dbReference>
<dbReference type="GO" id="GO:0043657">
    <property type="term" value="C:host cell"/>
    <property type="evidence" value="ECO:0007669"/>
    <property type="project" value="UniProtKB-SubCell"/>
</dbReference>
<dbReference type="GO" id="GO:0016020">
    <property type="term" value="C:membrane"/>
    <property type="evidence" value="ECO:0007669"/>
    <property type="project" value="UniProtKB-SubCell"/>
</dbReference>
<dbReference type="GO" id="GO:0004843">
    <property type="term" value="F:cysteine-type deubiquitinase activity"/>
    <property type="evidence" value="ECO:0000250"/>
    <property type="project" value="UniProtKB"/>
</dbReference>
<dbReference type="GO" id="GO:0019784">
    <property type="term" value="F:deNEDDylase activity"/>
    <property type="evidence" value="ECO:0000250"/>
    <property type="project" value="UniProtKB"/>
</dbReference>
<dbReference type="GO" id="GO:0000338">
    <property type="term" value="P:protein deneddylation"/>
    <property type="evidence" value="ECO:0000250"/>
    <property type="project" value="UniProtKB"/>
</dbReference>
<dbReference type="GO" id="GO:0016579">
    <property type="term" value="P:protein deubiquitination"/>
    <property type="evidence" value="ECO:0000250"/>
    <property type="project" value="UniProtKB"/>
</dbReference>
<dbReference type="GO" id="GO:0006508">
    <property type="term" value="P:proteolysis"/>
    <property type="evidence" value="ECO:0007669"/>
    <property type="project" value="UniProtKB-KW"/>
</dbReference>
<dbReference type="FunFam" id="3.40.395.10:FF:000016">
    <property type="entry name" value="Deubiquitinase and deneddylase Dub1"/>
    <property type="match status" value="1"/>
</dbReference>
<dbReference type="Gene3D" id="3.40.395.10">
    <property type="entry name" value="Adenoviral Proteinase, Chain A"/>
    <property type="match status" value="1"/>
</dbReference>
<dbReference type="InterPro" id="IPR038765">
    <property type="entry name" value="Papain-like_cys_pep_sf"/>
</dbReference>
<dbReference type="InterPro" id="IPR003653">
    <property type="entry name" value="Peptidase_C48_C"/>
</dbReference>
<dbReference type="Pfam" id="PF02902">
    <property type="entry name" value="Peptidase_C48"/>
    <property type="match status" value="1"/>
</dbReference>
<dbReference type="PRINTS" id="PR01217">
    <property type="entry name" value="PRICHEXTENSN"/>
</dbReference>
<dbReference type="SUPFAM" id="SSF54001">
    <property type="entry name" value="Cysteine proteinases"/>
    <property type="match status" value="1"/>
</dbReference>
<accession>D3UTF4</accession>
<evidence type="ECO:0000250" key="1"/>
<evidence type="ECO:0000255" key="2"/>
<evidence type="ECO:0000256" key="3">
    <source>
        <dbReference type="SAM" id="MobiDB-lite"/>
    </source>
</evidence>
<evidence type="ECO:0000305" key="4"/>
<keyword id="KW-0378">Hydrolase</keyword>
<keyword id="KW-0472">Membrane</keyword>
<keyword id="KW-0645">Protease</keyword>
<keyword id="KW-0964">Secreted</keyword>
<keyword id="KW-0788">Thiol protease</keyword>
<keyword id="KW-0812">Transmembrane</keyword>
<keyword id="KW-1133">Transmembrane helix</keyword>
<keyword id="KW-0833">Ubl conjugation pathway</keyword>
<keyword id="KW-0843">Virulence</keyword>
<comment type="function">
    <text evidence="1">Effector proteins function to alter host cell physiology and promote bacterial survival in host tissues. This protease possesses deubiquitinating and deneddylating activities (By similarity).</text>
</comment>
<comment type="subcellular location">
    <subcellularLocation>
        <location evidence="1">Secreted</location>
    </subcellularLocation>
    <subcellularLocation>
        <location evidence="1">Host cell</location>
    </subcellularLocation>
    <subcellularLocation>
        <location evidence="1">Membrane</location>
        <topology evidence="1">Single-pass membrane protein</topology>
    </subcellularLocation>
    <text evidence="1">Secreted, and delivered into the host cell.</text>
</comment>
<comment type="similarity">
    <text evidence="4">Belongs to the peptidase C48 family.</text>
</comment>
<reference key="1">
    <citation type="journal article" date="2010" name="Microbiology">
        <title>The Swedish new variant of Chlamydia trachomatis: Genome sequence, morphology, cell tropism and phenotypic characterization.</title>
        <authorList>
            <person name="Unemo M."/>
            <person name="Seth-Smith H.M."/>
            <person name="Cutcliffe L.T."/>
            <person name="Skilton R.J."/>
            <person name="Barlow D."/>
            <person name="Goulding D."/>
            <person name="Persson K."/>
            <person name="Harris S.R."/>
            <person name="Kelly A."/>
            <person name="Bjartling C."/>
            <person name="Fredlund H."/>
            <person name="Olcen P."/>
            <person name="Thomson N.R."/>
            <person name="Clarke I.N."/>
        </authorList>
    </citation>
    <scope>NUCLEOTIDE SEQUENCE [LARGE SCALE GENOMIC DNA]</scope>
    <source>
        <strain>Sweden2</strain>
    </source>
</reference>
<organism>
    <name type="scientific">Chlamydia trachomatis serovar E (strain Sweden2)</name>
    <dbReference type="NCBI Taxonomy" id="634464"/>
    <lineage>
        <taxon>Bacteria</taxon>
        <taxon>Pseudomonadati</taxon>
        <taxon>Chlamydiota</taxon>
        <taxon>Chlamydiia</taxon>
        <taxon>Chlamydiales</taxon>
        <taxon>Chlamydiaceae</taxon>
        <taxon>Chlamydia/Chlamydophila group</taxon>
        <taxon>Chlamydia</taxon>
    </lineage>
</organism>
<feature type="chain" id="PRO_0000396495" description="Deubiquitinase and deneddylase Dub1">
    <location>
        <begin position="1"/>
        <end position="418"/>
    </location>
</feature>
<feature type="transmembrane region" description="Helical" evidence="2">
    <location>
        <begin position="40"/>
        <end position="60"/>
    </location>
</feature>
<feature type="region of interest" description="Disordered" evidence="3">
    <location>
        <begin position="1"/>
        <end position="23"/>
    </location>
</feature>
<feature type="region of interest" description="Disordered" evidence="3">
    <location>
        <begin position="72"/>
        <end position="145"/>
    </location>
</feature>
<feature type="compositionally biased region" description="Polar residues" evidence="3">
    <location>
        <begin position="1"/>
        <end position="11"/>
    </location>
</feature>
<feature type="compositionally biased region" description="Pro residues" evidence="3">
    <location>
        <begin position="86"/>
        <end position="141"/>
    </location>
</feature>
<feature type="active site" evidence="2">
    <location>
        <position position="288"/>
    </location>
</feature>
<feature type="active site" evidence="2">
    <location>
        <position position="305"/>
    </location>
</feature>
<feature type="active site" evidence="2">
    <location>
        <position position="358"/>
    </location>
</feature>
<gene>
    <name type="primary">cdu1</name>
    <name type="ordered locus">SW2_8841</name>
</gene>
<protein>
    <recommendedName>
        <fullName>Deubiquitinase and deneddylase Dub1</fullName>
        <shortName>ChlaDub1</shortName>
        <ecNumber>3.4.22.-</ecNumber>
    </recommendedName>
</protein>
<sequence length="418" mass="46722">MLSPTNSTSKTAPVPPQDSSKPVLISEEPQNQLLQKVARTALVVLLVVVTLGLILLFYSFSDLQSFPWCCQTRPSTKEQPTISIPVPLPSPPLAVPRPSTPPPPVISRPSMPPAPTPAISPPSTPSAPKPSTPPPLPPKAPKPVKTQEDLLPFVPEQVFVEMYEDMARRRTIEALVPAWDSDIIFKCLCYFHTLYQGLIPLETFPPATIFNFKQKIISILEDKKAVLRGEPIKGSLPICCSEENYRRHLHGTTLLPVFMWYHPTPKTLSDTMQTMKQLAIKGSVGASHWLLVIVDIQARRLVYFDSLYNYVMSPEDMEKDLQSFAQQLDQVYPAYDSQKFSVKIAAKEVIQKGSGSSCGAWCCQFLHWYLRDPFTDALNDLPVDSVERHENLASFVQACEAAVQDLPELFWPEAKALF</sequence>
<proteinExistence type="inferred from homology"/>
<name>CDUB1_CHLTS</name>